<dbReference type="EMBL" id="CP000712">
    <property type="protein sequence ID" value="ABQ77985.1"/>
    <property type="molecule type" value="Genomic_DNA"/>
</dbReference>
<dbReference type="SMR" id="A5W1H5"/>
<dbReference type="KEGG" id="ppf:Pput_1832"/>
<dbReference type="eggNOG" id="COG0239">
    <property type="taxonomic scope" value="Bacteria"/>
</dbReference>
<dbReference type="HOGENOM" id="CLU_114342_2_3_6"/>
<dbReference type="GO" id="GO:0005886">
    <property type="term" value="C:plasma membrane"/>
    <property type="evidence" value="ECO:0007669"/>
    <property type="project" value="UniProtKB-SubCell"/>
</dbReference>
<dbReference type="GO" id="GO:0062054">
    <property type="term" value="F:fluoride channel activity"/>
    <property type="evidence" value="ECO:0007669"/>
    <property type="project" value="UniProtKB-UniRule"/>
</dbReference>
<dbReference type="GO" id="GO:0046872">
    <property type="term" value="F:metal ion binding"/>
    <property type="evidence" value="ECO:0007669"/>
    <property type="project" value="UniProtKB-KW"/>
</dbReference>
<dbReference type="GO" id="GO:0140114">
    <property type="term" value="P:cellular detoxification of fluoride"/>
    <property type="evidence" value="ECO:0007669"/>
    <property type="project" value="UniProtKB-UniRule"/>
</dbReference>
<dbReference type="HAMAP" id="MF_00454">
    <property type="entry name" value="FluC"/>
    <property type="match status" value="1"/>
</dbReference>
<dbReference type="InterPro" id="IPR003691">
    <property type="entry name" value="FluC"/>
</dbReference>
<dbReference type="NCBIfam" id="TIGR00494">
    <property type="entry name" value="crcB"/>
    <property type="match status" value="1"/>
</dbReference>
<dbReference type="NCBIfam" id="NF010830">
    <property type="entry name" value="PRK14234.1"/>
    <property type="match status" value="1"/>
</dbReference>
<dbReference type="PANTHER" id="PTHR28259">
    <property type="entry name" value="FLUORIDE EXPORT PROTEIN 1-RELATED"/>
    <property type="match status" value="1"/>
</dbReference>
<dbReference type="PANTHER" id="PTHR28259:SF1">
    <property type="entry name" value="FLUORIDE EXPORT PROTEIN 1-RELATED"/>
    <property type="match status" value="1"/>
</dbReference>
<dbReference type="Pfam" id="PF02537">
    <property type="entry name" value="CRCB"/>
    <property type="match status" value="1"/>
</dbReference>
<keyword id="KW-0997">Cell inner membrane</keyword>
<keyword id="KW-1003">Cell membrane</keyword>
<keyword id="KW-0407">Ion channel</keyword>
<keyword id="KW-0406">Ion transport</keyword>
<keyword id="KW-0472">Membrane</keyword>
<keyword id="KW-0479">Metal-binding</keyword>
<keyword id="KW-0915">Sodium</keyword>
<keyword id="KW-0812">Transmembrane</keyword>
<keyword id="KW-1133">Transmembrane helix</keyword>
<keyword id="KW-0813">Transport</keyword>
<proteinExistence type="inferred from homology"/>
<accession>A5W1H5</accession>
<reference key="1">
    <citation type="submission" date="2007-05" db="EMBL/GenBank/DDBJ databases">
        <title>Complete sequence of Pseudomonas putida F1.</title>
        <authorList>
            <consortium name="US DOE Joint Genome Institute"/>
            <person name="Copeland A."/>
            <person name="Lucas S."/>
            <person name="Lapidus A."/>
            <person name="Barry K."/>
            <person name="Detter J.C."/>
            <person name="Glavina del Rio T."/>
            <person name="Hammon N."/>
            <person name="Israni S."/>
            <person name="Dalin E."/>
            <person name="Tice H."/>
            <person name="Pitluck S."/>
            <person name="Chain P."/>
            <person name="Malfatti S."/>
            <person name="Shin M."/>
            <person name="Vergez L."/>
            <person name="Schmutz J."/>
            <person name="Larimer F."/>
            <person name="Land M."/>
            <person name="Hauser L."/>
            <person name="Kyrpides N."/>
            <person name="Lykidis A."/>
            <person name="Parales R."/>
            <person name="Richardson P."/>
        </authorList>
    </citation>
    <scope>NUCLEOTIDE SEQUENCE [LARGE SCALE GENOMIC DNA]</scope>
    <source>
        <strain>ATCC 700007 / DSM 6899 / JCM 31910 / BCRC 17059 / LMG 24140 / F1</strain>
    </source>
</reference>
<protein>
    <recommendedName>
        <fullName evidence="1">Fluoride-specific ion channel FluC</fullName>
    </recommendedName>
</protein>
<gene>
    <name evidence="1" type="primary">fluC</name>
    <name evidence="1" type="synonym">crcB</name>
    <name type="ordered locus">Pput_1832</name>
</gene>
<feature type="chain" id="PRO_1000060316" description="Fluoride-specific ion channel FluC">
    <location>
        <begin position="1"/>
        <end position="124"/>
    </location>
</feature>
<feature type="transmembrane region" description="Helical" evidence="1">
    <location>
        <begin position="1"/>
        <end position="21"/>
    </location>
</feature>
<feature type="transmembrane region" description="Helical" evidence="1">
    <location>
        <begin position="37"/>
        <end position="57"/>
    </location>
</feature>
<feature type="transmembrane region" description="Helical" evidence="1">
    <location>
        <begin position="69"/>
        <end position="89"/>
    </location>
</feature>
<feature type="transmembrane region" description="Helical" evidence="1">
    <location>
        <begin position="99"/>
        <end position="119"/>
    </location>
</feature>
<feature type="binding site" evidence="1">
    <location>
        <position position="76"/>
    </location>
    <ligand>
        <name>Na(+)</name>
        <dbReference type="ChEBI" id="CHEBI:29101"/>
        <note>structural</note>
    </ligand>
</feature>
<feature type="binding site" evidence="1">
    <location>
        <position position="79"/>
    </location>
    <ligand>
        <name>Na(+)</name>
        <dbReference type="ChEBI" id="CHEBI:29101"/>
        <note>structural</note>
    </ligand>
</feature>
<sequence length="124" mass="12973">MIALIAAVSAGGIAGTLLRFATTNWVAAHWPRHFYAGTLAVNLVGCLLIGLLYGLFLHKPLAPVELRAGLIVGFLGGLTTFSSFSLDTVRLMESGQVPLALGYTSISVVGGLLATWAGLSLTRF</sequence>
<name>FLUC_PSEP1</name>
<comment type="function">
    <text evidence="1">Fluoride-specific ion channel. Important for reducing fluoride concentration in the cell, thus reducing its toxicity.</text>
</comment>
<comment type="catalytic activity">
    <reaction evidence="1">
        <text>fluoride(in) = fluoride(out)</text>
        <dbReference type="Rhea" id="RHEA:76159"/>
        <dbReference type="ChEBI" id="CHEBI:17051"/>
    </reaction>
    <physiologicalReaction direction="left-to-right" evidence="1">
        <dbReference type="Rhea" id="RHEA:76160"/>
    </physiologicalReaction>
</comment>
<comment type="activity regulation">
    <text evidence="1">Na(+) is not transported, but it plays an essential structural role and its presence is essential for fluoride channel function.</text>
</comment>
<comment type="subcellular location">
    <subcellularLocation>
        <location evidence="1">Cell inner membrane</location>
        <topology evidence="1">Multi-pass membrane protein</topology>
    </subcellularLocation>
</comment>
<comment type="similarity">
    <text evidence="1">Belongs to the fluoride channel Fluc/FEX (TC 1.A.43) family.</text>
</comment>
<evidence type="ECO:0000255" key="1">
    <source>
        <dbReference type="HAMAP-Rule" id="MF_00454"/>
    </source>
</evidence>
<organism>
    <name type="scientific">Pseudomonas putida (strain ATCC 700007 / DSM 6899 / JCM 31910 / BCRC 17059 / LMG 24140 / F1)</name>
    <dbReference type="NCBI Taxonomy" id="351746"/>
    <lineage>
        <taxon>Bacteria</taxon>
        <taxon>Pseudomonadati</taxon>
        <taxon>Pseudomonadota</taxon>
        <taxon>Gammaproteobacteria</taxon>
        <taxon>Pseudomonadales</taxon>
        <taxon>Pseudomonadaceae</taxon>
        <taxon>Pseudomonas</taxon>
    </lineage>
</organism>